<organism>
    <name type="scientific">Campylobacter jejuni subsp. jejuni serotype O:2 (strain ATCC 700819 / NCTC 11168)</name>
    <dbReference type="NCBI Taxonomy" id="192222"/>
    <lineage>
        <taxon>Bacteria</taxon>
        <taxon>Pseudomonadati</taxon>
        <taxon>Campylobacterota</taxon>
        <taxon>Epsilonproteobacteria</taxon>
        <taxon>Campylobacterales</taxon>
        <taxon>Campylobacteraceae</taxon>
        <taxon>Campylobacter</taxon>
    </lineage>
</organism>
<keyword id="KW-1185">Reference proteome</keyword>
<keyword id="KW-0687">Ribonucleoprotein</keyword>
<keyword id="KW-0689">Ribosomal protein</keyword>
<keyword id="KW-0694">RNA-binding</keyword>
<keyword id="KW-0699">rRNA-binding</keyword>
<comment type="function">
    <text evidence="1">This protein binds to the 23S rRNA, and is important in its secondary structure. It is located near the subunit interface in the base of the L7/L12 stalk, and near the tRNA binding site of the peptidyltransferase center.</text>
</comment>
<comment type="subunit">
    <text evidence="1">Part of the 50S ribosomal subunit.</text>
</comment>
<comment type="similarity">
    <text evidence="1">Belongs to the universal ribosomal protein uL6 family.</text>
</comment>
<dbReference type="EMBL" id="AL111168">
    <property type="protein sequence ID" value="CAL35786.1"/>
    <property type="molecule type" value="Genomic_DNA"/>
</dbReference>
<dbReference type="PIR" id="H81266">
    <property type="entry name" value="H81266"/>
</dbReference>
<dbReference type="RefSeq" id="WP_002851302.1">
    <property type="nucleotide sequence ID" value="NZ_SZUC01000002.1"/>
</dbReference>
<dbReference type="RefSeq" id="YP_002345058.1">
    <property type="nucleotide sequence ID" value="NC_002163.1"/>
</dbReference>
<dbReference type="SMR" id="Q0P7T9"/>
<dbReference type="IntAct" id="Q0P7T9">
    <property type="interactions" value="144"/>
</dbReference>
<dbReference type="STRING" id="192222.Cj1692c"/>
<dbReference type="PaxDb" id="192222-Cj1692c"/>
<dbReference type="EnsemblBacteria" id="CAL35786">
    <property type="protein sequence ID" value="CAL35786"/>
    <property type="gene ID" value="Cj1692c"/>
</dbReference>
<dbReference type="GeneID" id="905966"/>
<dbReference type="KEGG" id="cje:Cj1692c"/>
<dbReference type="PATRIC" id="fig|192222.6.peg.1666"/>
<dbReference type="eggNOG" id="COG0097">
    <property type="taxonomic scope" value="Bacteria"/>
</dbReference>
<dbReference type="HOGENOM" id="CLU_065464_1_2_7"/>
<dbReference type="OrthoDB" id="9805007at2"/>
<dbReference type="Proteomes" id="UP000000799">
    <property type="component" value="Chromosome"/>
</dbReference>
<dbReference type="GO" id="GO:0022625">
    <property type="term" value="C:cytosolic large ribosomal subunit"/>
    <property type="evidence" value="ECO:0007669"/>
    <property type="project" value="TreeGrafter"/>
</dbReference>
<dbReference type="GO" id="GO:0019843">
    <property type="term" value="F:rRNA binding"/>
    <property type="evidence" value="ECO:0007669"/>
    <property type="project" value="UniProtKB-UniRule"/>
</dbReference>
<dbReference type="GO" id="GO:0003735">
    <property type="term" value="F:structural constituent of ribosome"/>
    <property type="evidence" value="ECO:0007669"/>
    <property type="project" value="InterPro"/>
</dbReference>
<dbReference type="GO" id="GO:0002181">
    <property type="term" value="P:cytoplasmic translation"/>
    <property type="evidence" value="ECO:0007669"/>
    <property type="project" value="TreeGrafter"/>
</dbReference>
<dbReference type="FunFam" id="3.90.930.12:FF:000001">
    <property type="entry name" value="50S ribosomal protein L6"/>
    <property type="match status" value="1"/>
</dbReference>
<dbReference type="Gene3D" id="3.90.930.12">
    <property type="entry name" value="Ribosomal protein L6, alpha-beta domain"/>
    <property type="match status" value="2"/>
</dbReference>
<dbReference type="HAMAP" id="MF_01365_B">
    <property type="entry name" value="Ribosomal_uL6_B"/>
    <property type="match status" value="1"/>
</dbReference>
<dbReference type="InterPro" id="IPR000702">
    <property type="entry name" value="Ribosomal_uL6-like"/>
</dbReference>
<dbReference type="InterPro" id="IPR036789">
    <property type="entry name" value="Ribosomal_uL6-like_a/b-dom_sf"/>
</dbReference>
<dbReference type="InterPro" id="IPR020040">
    <property type="entry name" value="Ribosomal_uL6_a/b-dom"/>
</dbReference>
<dbReference type="InterPro" id="IPR019906">
    <property type="entry name" value="Ribosomal_uL6_bac-type"/>
</dbReference>
<dbReference type="InterPro" id="IPR002358">
    <property type="entry name" value="Ribosomal_uL6_CS"/>
</dbReference>
<dbReference type="NCBIfam" id="TIGR03654">
    <property type="entry name" value="L6_bact"/>
    <property type="match status" value="1"/>
</dbReference>
<dbReference type="PANTHER" id="PTHR11655">
    <property type="entry name" value="60S/50S RIBOSOMAL PROTEIN L6/L9"/>
    <property type="match status" value="1"/>
</dbReference>
<dbReference type="PANTHER" id="PTHR11655:SF14">
    <property type="entry name" value="LARGE RIBOSOMAL SUBUNIT PROTEIN UL6M"/>
    <property type="match status" value="1"/>
</dbReference>
<dbReference type="Pfam" id="PF00347">
    <property type="entry name" value="Ribosomal_L6"/>
    <property type="match status" value="2"/>
</dbReference>
<dbReference type="PIRSF" id="PIRSF002162">
    <property type="entry name" value="Ribosomal_L6"/>
    <property type="match status" value="1"/>
</dbReference>
<dbReference type="PRINTS" id="PR00059">
    <property type="entry name" value="RIBOSOMALL6"/>
</dbReference>
<dbReference type="SUPFAM" id="SSF56053">
    <property type="entry name" value="Ribosomal protein L6"/>
    <property type="match status" value="2"/>
</dbReference>
<dbReference type="PROSITE" id="PS00525">
    <property type="entry name" value="RIBOSOMAL_L6_1"/>
    <property type="match status" value="1"/>
</dbReference>
<proteinExistence type="inferred from homology"/>
<gene>
    <name evidence="1" type="primary">rplF</name>
    <name type="ordered locus">Cj1692c</name>
</gene>
<name>RL6_CAMJE</name>
<feature type="chain" id="PRO_0000265237" description="Large ribosomal subunit protein uL6">
    <location>
        <begin position="1"/>
        <end position="178"/>
    </location>
</feature>
<protein>
    <recommendedName>
        <fullName evidence="1">Large ribosomal subunit protein uL6</fullName>
    </recommendedName>
    <alternativeName>
        <fullName evidence="2">50S ribosomal protein L6</fullName>
    </alternativeName>
</protein>
<sequence length="178" mass="19587">MSRIGKQPIAIPAGVEVKLEGNLLKFKKGNLAKELDTKANVNVEIKDNNILFSPKGEDRQSRAYWGTYRALAYNIVVGLTQGFSKTLEINGVGYKAALKGKVLELSLGFSHPINYDIPEGIEIVVDKNTIAVKGSDKQVVGQVAAQIREFRPPEPYKGKGVKYSDERIIRKAGKTSKK</sequence>
<evidence type="ECO:0000255" key="1">
    <source>
        <dbReference type="HAMAP-Rule" id="MF_01365"/>
    </source>
</evidence>
<evidence type="ECO:0000305" key="2"/>
<accession>Q0P7T9</accession>
<reference key="1">
    <citation type="journal article" date="2000" name="Nature">
        <title>The genome sequence of the food-borne pathogen Campylobacter jejuni reveals hypervariable sequences.</title>
        <authorList>
            <person name="Parkhill J."/>
            <person name="Wren B.W."/>
            <person name="Mungall K.L."/>
            <person name="Ketley J.M."/>
            <person name="Churcher C.M."/>
            <person name="Basham D."/>
            <person name="Chillingworth T."/>
            <person name="Davies R.M."/>
            <person name="Feltwell T."/>
            <person name="Holroyd S."/>
            <person name="Jagels K."/>
            <person name="Karlyshev A.V."/>
            <person name="Moule S."/>
            <person name="Pallen M.J."/>
            <person name="Penn C.W."/>
            <person name="Quail M.A."/>
            <person name="Rajandream M.A."/>
            <person name="Rutherford K.M."/>
            <person name="van Vliet A.H.M."/>
            <person name="Whitehead S."/>
            <person name="Barrell B.G."/>
        </authorList>
    </citation>
    <scope>NUCLEOTIDE SEQUENCE [LARGE SCALE GENOMIC DNA]</scope>
    <source>
        <strain>ATCC 700819 / NCTC 11168</strain>
    </source>
</reference>